<name>IGLC1_HUMAN</name>
<protein>
    <recommendedName>
        <fullName evidence="2 6">Immunoglobulin lambda constant 1</fullName>
    </recommendedName>
    <alternativeName>
        <fullName evidence="8">Ig lambda chain C region MGC</fullName>
    </alternativeName>
    <alternativeName>
        <fullName evidence="7">Ig lambda-1 chain C region</fullName>
    </alternativeName>
</protein>
<dbReference type="EMBL" id="X51755">
    <property type="protein sequence ID" value="CAA36047.1"/>
    <property type="status" value="ALT_INIT"/>
    <property type="molecule type" value="Genomic_DNA"/>
</dbReference>
<dbReference type="EMBL" id="AC245028">
    <property type="status" value="NOT_ANNOTATED_CDS"/>
    <property type="molecule type" value="Genomic_DNA"/>
</dbReference>
<dbReference type="EMBL" id="J00252">
    <property type="protein sequence ID" value="AAA59106.1"/>
    <property type="molecule type" value="Genomic_DNA"/>
</dbReference>
<dbReference type="PIR" id="A92057">
    <property type="entry name" value="L2HU"/>
</dbReference>
<dbReference type="PDB" id="1ZVO">
    <property type="method" value="X-ray"/>
    <property type="chains" value="A/B=9-106"/>
</dbReference>
<dbReference type="PDB" id="2FB4">
    <property type="method" value="X-ray"/>
    <property type="resolution" value="1.90 A"/>
    <property type="chains" value="L=1-106"/>
</dbReference>
<dbReference type="PDB" id="2IG2">
    <property type="method" value="X-ray"/>
    <property type="resolution" value="3.00 A"/>
    <property type="chains" value="L=1-106"/>
</dbReference>
<dbReference type="PDBsum" id="1ZVO"/>
<dbReference type="PDBsum" id="2FB4"/>
<dbReference type="PDBsum" id="2IG2"/>
<dbReference type="SMR" id="P0CG04"/>
<dbReference type="ComplexPortal" id="CPX-6906">
    <property type="entry name" value="IgD - Ig lambda 1 immunoglobulin complex, constant regions"/>
</dbReference>
<dbReference type="ComplexPortal" id="CPX-6922">
    <property type="entry name" value="IgM - Ig lambda 1 immunoglobulin complex, constant regions"/>
</dbReference>
<dbReference type="ComplexPortal" id="CPX-6931">
    <property type="entry name" value="IgG1 - Ig lambda 1 immunoglobulin complex, constant regions"/>
</dbReference>
<dbReference type="ComplexPortal" id="CPX-6938">
    <property type="entry name" value="IgG2 - Ig lambda 1 immunoglobulin complex, constant regions"/>
</dbReference>
<dbReference type="ComplexPortal" id="CPX-6944">
    <property type="entry name" value="IgG3 - Ig lambda 1 immunoglobulin complex, constant regions"/>
</dbReference>
<dbReference type="ComplexPortal" id="CPX-6950">
    <property type="entry name" value="IgG4 - Ig lambda 1 immunoglobulin complex, constant regions"/>
</dbReference>
<dbReference type="ComplexPortal" id="CPX-6956">
    <property type="entry name" value="IgA1 - Ig lambda 1 immunoglobulin complex, constant regions"/>
</dbReference>
<dbReference type="ComplexPortal" id="CPX-6963">
    <property type="entry name" value="IgA2 - Ig lambda 1 immunoglobulin complex, constant regions"/>
</dbReference>
<dbReference type="ComplexPortal" id="CPX-6970">
    <property type="entry name" value="IgE - Ig lambda 1 immunoglobulin complex, constant regions"/>
</dbReference>
<dbReference type="FunCoup" id="P0CG04">
    <property type="interactions" value="245"/>
</dbReference>
<dbReference type="IntAct" id="P0CG04">
    <property type="interactions" value="11"/>
</dbReference>
<dbReference type="MINT" id="P0CG04"/>
<dbReference type="DrugBank" id="DB03088">
    <property type="generic name" value="Pidolic acid"/>
</dbReference>
<dbReference type="IMGT_GENE-DB" id="IGLC1"/>
<dbReference type="GlyGen" id="P0CG04">
    <property type="glycosylation" value="2 sites, 1 O-linked glycan (1 site)"/>
</dbReference>
<dbReference type="iPTMnet" id="P0CG04"/>
<dbReference type="SwissPalm" id="P0CG04"/>
<dbReference type="BioMuta" id="IGLC1"/>
<dbReference type="DMDM" id="298351713"/>
<dbReference type="jPOST" id="P0CG04"/>
<dbReference type="MassIVE" id="P0CG04"/>
<dbReference type="PeptideAtlas" id="P0CG04"/>
<dbReference type="ProteomicsDB" id="52448"/>
<dbReference type="Pumba" id="P0CG04"/>
<dbReference type="UCSC" id="uc062cdy.1">
    <property type="organism name" value="human"/>
</dbReference>
<dbReference type="AGR" id="HGNC:5855"/>
<dbReference type="GeneCards" id="IGLC1"/>
<dbReference type="HGNC" id="HGNC:5855">
    <property type="gene designation" value="IGLC1"/>
</dbReference>
<dbReference type="MalaCards" id="IGLC1"/>
<dbReference type="MIM" id="147220">
    <property type="type" value="gene"/>
</dbReference>
<dbReference type="neXtProt" id="NX_P0CG04"/>
<dbReference type="InParanoid" id="P0CG04"/>
<dbReference type="OrthoDB" id="9049585at2759"/>
<dbReference type="PAN-GO" id="P0CG04">
    <property type="GO annotations" value="11 GO annotations based on evolutionary models"/>
</dbReference>
<dbReference type="PhylomeDB" id="P0CG04"/>
<dbReference type="PathwayCommons" id="P0CG04"/>
<dbReference type="Reactome" id="R-HSA-166663">
    <property type="pathway name" value="Initial triggering of complement"/>
</dbReference>
<dbReference type="Reactome" id="R-HSA-173623">
    <property type="pathway name" value="Classical antibody-mediated complement activation"/>
</dbReference>
<dbReference type="Reactome" id="R-HSA-198933">
    <property type="pathway name" value="Immunoregulatory interactions between a Lymphoid and a non-Lymphoid cell"/>
</dbReference>
<dbReference type="Reactome" id="R-HSA-202733">
    <property type="pathway name" value="Cell surface interactions at the vascular wall"/>
</dbReference>
<dbReference type="Reactome" id="R-HSA-2029481">
    <property type="pathway name" value="FCGR activation"/>
</dbReference>
<dbReference type="Reactome" id="R-HSA-2029482">
    <property type="pathway name" value="Regulation of actin dynamics for phagocytic cup formation"/>
</dbReference>
<dbReference type="Reactome" id="R-HSA-2029485">
    <property type="pathway name" value="Role of phospholipids in phagocytosis"/>
</dbReference>
<dbReference type="Reactome" id="R-HSA-2168880">
    <property type="pathway name" value="Scavenging of heme from plasma"/>
</dbReference>
<dbReference type="Reactome" id="R-HSA-2454202">
    <property type="pathway name" value="Fc epsilon receptor (FCERI) signaling"/>
</dbReference>
<dbReference type="Reactome" id="R-HSA-2730905">
    <property type="pathway name" value="Role of LAT2/NTAL/LAB on calcium mobilization"/>
</dbReference>
<dbReference type="Reactome" id="R-HSA-2871796">
    <property type="pathway name" value="FCERI mediated MAPK activation"/>
</dbReference>
<dbReference type="Reactome" id="R-HSA-2871809">
    <property type="pathway name" value="FCERI mediated Ca+2 mobilization"/>
</dbReference>
<dbReference type="Reactome" id="R-HSA-2871837">
    <property type="pathway name" value="FCERI mediated NF-kB activation"/>
</dbReference>
<dbReference type="Reactome" id="R-HSA-5690714">
    <property type="pathway name" value="CD22 mediated BCR regulation"/>
</dbReference>
<dbReference type="Reactome" id="R-HSA-9664323">
    <property type="pathway name" value="FCGR3A-mediated IL10 synthesis"/>
</dbReference>
<dbReference type="Reactome" id="R-HSA-9664422">
    <property type="pathway name" value="FCGR3A-mediated phagocytosis"/>
</dbReference>
<dbReference type="Reactome" id="R-HSA-9679191">
    <property type="pathway name" value="Potential therapeutics for SARS"/>
</dbReference>
<dbReference type="Reactome" id="R-HSA-977606">
    <property type="pathway name" value="Regulation of Complement cascade"/>
</dbReference>
<dbReference type="Reactome" id="R-HSA-983695">
    <property type="pathway name" value="Antigen activates B Cell Receptor (BCR) leading to generation of second messengers"/>
</dbReference>
<dbReference type="SignaLink" id="P0CG04"/>
<dbReference type="EvolutionaryTrace" id="P0CG04"/>
<dbReference type="Pharos" id="P0CG04">
    <property type="development level" value="Tdark"/>
</dbReference>
<dbReference type="PRO" id="PR:P0CG04"/>
<dbReference type="Proteomes" id="UP000005640">
    <property type="component" value="Unplaced"/>
</dbReference>
<dbReference type="RNAct" id="P0CG04">
    <property type="molecule type" value="protein"/>
</dbReference>
<dbReference type="GO" id="GO:0072562">
    <property type="term" value="C:blood microparticle"/>
    <property type="evidence" value="ECO:0007005"/>
    <property type="project" value="UniProtKB"/>
</dbReference>
<dbReference type="GO" id="GO:0070062">
    <property type="term" value="C:extracellular exosome"/>
    <property type="evidence" value="ECO:0007005"/>
    <property type="project" value="UniProtKB"/>
</dbReference>
<dbReference type="GO" id="GO:0005576">
    <property type="term" value="C:extracellular region"/>
    <property type="evidence" value="ECO:0000304"/>
    <property type="project" value="Reactome"/>
</dbReference>
<dbReference type="GO" id="GO:0005615">
    <property type="term" value="C:extracellular space"/>
    <property type="evidence" value="ECO:0007005"/>
    <property type="project" value="UniProtKB"/>
</dbReference>
<dbReference type="GO" id="GO:0071745">
    <property type="term" value="C:IgA immunoglobulin complex"/>
    <property type="evidence" value="ECO:0000303"/>
    <property type="project" value="ComplexPortal"/>
</dbReference>
<dbReference type="GO" id="GO:0071738">
    <property type="term" value="C:IgD immunoglobulin complex"/>
    <property type="evidence" value="ECO:0000303"/>
    <property type="project" value="ComplexPortal"/>
</dbReference>
<dbReference type="GO" id="GO:0071742">
    <property type="term" value="C:IgE immunoglobulin complex"/>
    <property type="evidence" value="ECO:0000303"/>
    <property type="project" value="ComplexPortal"/>
</dbReference>
<dbReference type="GO" id="GO:0071735">
    <property type="term" value="C:IgG immunoglobulin complex"/>
    <property type="evidence" value="ECO:0000318"/>
    <property type="project" value="GO_Central"/>
</dbReference>
<dbReference type="GO" id="GO:0071753">
    <property type="term" value="C:IgM immunoglobulin complex"/>
    <property type="evidence" value="ECO:0000303"/>
    <property type="project" value="ComplexPortal"/>
</dbReference>
<dbReference type="GO" id="GO:0005886">
    <property type="term" value="C:plasma membrane"/>
    <property type="evidence" value="ECO:0000304"/>
    <property type="project" value="Reactome"/>
</dbReference>
<dbReference type="GO" id="GO:0003823">
    <property type="term" value="F:antigen binding"/>
    <property type="evidence" value="ECO:0000318"/>
    <property type="project" value="GO_Central"/>
</dbReference>
<dbReference type="GO" id="GO:0002250">
    <property type="term" value="P:adaptive immune response"/>
    <property type="evidence" value="ECO:0000303"/>
    <property type="project" value="ComplexPortal"/>
</dbReference>
<dbReference type="GO" id="GO:0050853">
    <property type="term" value="P:B cell receptor signaling pathway"/>
    <property type="evidence" value="ECO:0000303"/>
    <property type="project" value="ComplexPortal"/>
</dbReference>
<dbReference type="GO" id="GO:0006955">
    <property type="term" value="P:immune response"/>
    <property type="evidence" value="ECO:0000303"/>
    <property type="project" value="UniProtKB"/>
</dbReference>
<dbReference type="GO" id="GO:0016064">
    <property type="term" value="P:immunoglobulin mediated immune response"/>
    <property type="evidence" value="ECO:0000318"/>
    <property type="project" value="GO_Central"/>
</dbReference>
<dbReference type="CDD" id="cd07699">
    <property type="entry name" value="IgC1_L"/>
    <property type="match status" value="1"/>
</dbReference>
<dbReference type="FunFam" id="2.60.40.10:FF:000283">
    <property type="entry name" value="Immunoglobulin kappa constant"/>
    <property type="match status" value="1"/>
</dbReference>
<dbReference type="Gene3D" id="2.60.40.10">
    <property type="entry name" value="Immunoglobulins"/>
    <property type="match status" value="1"/>
</dbReference>
<dbReference type="InterPro" id="IPR007110">
    <property type="entry name" value="Ig-like_dom"/>
</dbReference>
<dbReference type="InterPro" id="IPR036179">
    <property type="entry name" value="Ig-like_dom_sf"/>
</dbReference>
<dbReference type="InterPro" id="IPR013783">
    <property type="entry name" value="Ig-like_fold"/>
</dbReference>
<dbReference type="InterPro" id="IPR003006">
    <property type="entry name" value="Ig/MHC_CS"/>
</dbReference>
<dbReference type="InterPro" id="IPR003597">
    <property type="entry name" value="Ig_C1-set"/>
</dbReference>
<dbReference type="InterPro" id="IPR050160">
    <property type="entry name" value="MHC/Immunoglobulin"/>
</dbReference>
<dbReference type="PANTHER" id="PTHR19944:SF98">
    <property type="entry name" value="IG-LIKE DOMAIN-CONTAINING PROTEIN"/>
    <property type="match status" value="1"/>
</dbReference>
<dbReference type="PANTHER" id="PTHR19944">
    <property type="entry name" value="MHC CLASS II-RELATED"/>
    <property type="match status" value="1"/>
</dbReference>
<dbReference type="Pfam" id="PF07654">
    <property type="entry name" value="C1-set"/>
    <property type="match status" value="1"/>
</dbReference>
<dbReference type="SMART" id="SM00407">
    <property type="entry name" value="IGc1"/>
    <property type="match status" value="1"/>
</dbReference>
<dbReference type="SUPFAM" id="SSF48726">
    <property type="entry name" value="Immunoglobulin"/>
    <property type="match status" value="1"/>
</dbReference>
<dbReference type="PROSITE" id="PS50835">
    <property type="entry name" value="IG_LIKE"/>
    <property type="match status" value="1"/>
</dbReference>
<dbReference type="PROSITE" id="PS00290">
    <property type="entry name" value="IG_MHC"/>
    <property type="match status" value="1"/>
</dbReference>
<evidence type="ECO:0000255" key="1">
    <source>
        <dbReference type="PROSITE-ProRule" id="PRU00114"/>
    </source>
</evidence>
<evidence type="ECO:0000303" key="2">
    <source>
    </source>
</evidence>
<evidence type="ECO:0000303" key="3">
    <source>
    </source>
</evidence>
<evidence type="ECO:0000303" key="4">
    <source>
    </source>
</evidence>
<evidence type="ECO:0000303" key="5">
    <source>
    </source>
</evidence>
<evidence type="ECO:0000303" key="6">
    <source ref="6"/>
</evidence>
<evidence type="ECO:0000305" key="7"/>
<evidence type="ECO:0000305" key="8">
    <source>
    </source>
</evidence>
<evidence type="ECO:0007829" key="9">
    <source>
        <dbReference type="PDB" id="2FB4"/>
    </source>
</evidence>
<evidence type="ECO:0007829" key="10">
    <source>
        <dbReference type="PDB" id="2IG2"/>
    </source>
</evidence>
<comment type="function">
    <text evidence="3 4 5">Constant region of immunoglobulin light chains. Immunoglobulins, also known as antibodies, are membrane-bound or secreted glycoproteins produced by B lymphocytes. In the recognition phase of humoral immunity, the membrane-bound immunoglobulins serve as receptors which, upon binding of a specific antigen, trigger the clonal expansion and differentiation of B lymphocytes into immunoglobulins-secreting plasma cells. Secreted immunoglobulins mediate the effector phase of humoral immunity, which results in the elimination of bound antigens (PubMed:20176268, PubMed:22158414). The antigen binding site is formed by the variable domain of one heavy chain, together with that of its associated light chain. Thus, each immunoglobulin has two antigen binding sites with remarkable affinity for a particular antigen. The variable domains are assembled by a process called V-(D)-J rearrangement and can then be subjected to somatic hypermutations which, after exposure to antigen and selection, allow affinity maturation for a particular antigen (PubMed:17576170, PubMed:20176268).</text>
</comment>
<comment type="subunit">
    <text evidence="4">Immunoglobulins are composed of two identical heavy chains and two identical light chains; disulfide-linked.</text>
</comment>
<comment type="subcellular location">
    <subcellularLocation>
        <location evidence="4 5">Secreted</location>
    </subcellularLocation>
    <subcellularLocation>
        <location evidence="4 5">Cell membrane</location>
    </subcellularLocation>
</comment>
<comment type="polymorphism">
    <text evidence="7">There are several alleles. The sequence shown is that of IMGT allele IGLC1*02.</text>
</comment>
<comment type="caution">
    <text evidence="7">For an example of a full-length immunoglobulin lambda light chain see AC P0DOX8.</text>
</comment>
<comment type="sequence caution" evidence="7">
    <conflict type="erroneous initiation">
        <sequence resource="EMBL-CDS" id="CAA36047"/>
    </conflict>
    <text>Truncated N-terminus.</text>
</comment>
<proteinExistence type="evidence at protein level"/>
<keyword id="KW-0002">3D-structure</keyword>
<keyword id="KW-1064">Adaptive immunity</keyword>
<keyword id="KW-0086">Bence-Jones protein</keyword>
<keyword id="KW-1003">Cell membrane</keyword>
<keyword id="KW-0903">Direct protein sequencing</keyword>
<keyword id="KW-1015">Disulfide bond</keyword>
<keyword id="KW-0391">Immunity</keyword>
<keyword id="KW-1280">Immunoglobulin</keyword>
<keyword id="KW-0393">Immunoglobulin domain</keyword>
<keyword id="KW-0472">Membrane</keyword>
<keyword id="KW-1185">Reference proteome</keyword>
<keyword id="KW-0964">Secreted</keyword>
<accession>P0CG04</accession>
<accession>A0A075B6K8</accession>
<accession>A0M8Q4</accession>
<accession>P01842</accession>
<accession>P80423</accession>
<reference key="1">
    <citation type="journal article" date="1974" name="Biochemistry">
        <title>Primary structure of the Mcg lambda chain.</title>
        <authorList>
            <person name="Fett J.W."/>
            <person name="Deutsch H.F."/>
        </authorList>
    </citation>
    <scope>PROTEIN SEQUENCE</scope>
</reference>
<reference key="2">
    <citation type="journal article" date="1990" name="J. Exp. Med.">
        <title>Structure and expression of the human immunoglobulin lambda genes.</title>
        <authorList>
            <person name="Vasicek T.J."/>
            <person name="Leder P."/>
        </authorList>
    </citation>
    <scope>NUCLEOTIDE SEQUENCE [GENOMIC DNA] (IMGT ALLELE IGLC1*02)</scope>
</reference>
<reference key="3">
    <citation type="journal article" date="1999" name="Nature">
        <title>The DNA sequence of human chromosome 22.</title>
        <authorList>
            <person name="Dunham I."/>
            <person name="Hunt A.R."/>
            <person name="Collins J.E."/>
            <person name="Bruskiewich R."/>
            <person name="Beare D.M."/>
            <person name="Clamp M."/>
            <person name="Smink L.J."/>
            <person name="Ainscough R."/>
            <person name="Almeida J.P."/>
            <person name="Babbage A.K."/>
            <person name="Bagguley C."/>
            <person name="Bailey J."/>
            <person name="Barlow K.F."/>
            <person name="Bates K.N."/>
            <person name="Beasley O.P."/>
            <person name="Bird C.P."/>
            <person name="Blakey S.E."/>
            <person name="Bridgeman A.M."/>
            <person name="Buck D."/>
            <person name="Burgess J."/>
            <person name="Burrill W.D."/>
            <person name="Burton J."/>
            <person name="Carder C."/>
            <person name="Carter N.P."/>
            <person name="Chen Y."/>
            <person name="Clark G."/>
            <person name="Clegg S.M."/>
            <person name="Cobley V.E."/>
            <person name="Cole C.G."/>
            <person name="Collier R.E."/>
            <person name="Connor R."/>
            <person name="Conroy D."/>
            <person name="Corby N.R."/>
            <person name="Coville G.J."/>
            <person name="Cox A.V."/>
            <person name="Davis J."/>
            <person name="Dawson E."/>
            <person name="Dhami P.D."/>
            <person name="Dockree C."/>
            <person name="Dodsworth S.J."/>
            <person name="Durbin R.M."/>
            <person name="Ellington A.G."/>
            <person name="Evans K.L."/>
            <person name="Fey J.M."/>
            <person name="Fleming K."/>
            <person name="French L."/>
            <person name="Garner A.A."/>
            <person name="Gilbert J.G.R."/>
            <person name="Goward M.E."/>
            <person name="Grafham D.V."/>
            <person name="Griffiths M.N.D."/>
            <person name="Hall C."/>
            <person name="Hall R.E."/>
            <person name="Hall-Tamlyn G."/>
            <person name="Heathcott R.W."/>
            <person name="Ho S."/>
            <person name="Holmes S."/>
            <person name="Hunt S.E."/>
            <person name="Jones M.C."/>
            <person name="Kershaw J."/>
            <person name="Kimberley A.M."/>
            <person name="King A."/>
            <person name="Laird G.K."/>
            <person name="Langford C.F."/>
            <person name="Leversha M.A."/>
            <person name="Lloyd C."/>
            <person name="Lloyd D.M."/>
            <person name="Martyn I.D."/>
            <person name="Mashreghi-Mohammadi M."/>
            <person name="Matthews L.H."/>
            <person name="Mccann O.T."/>
            <person name="Mcclay J."/>
            <person name="Mclaren S."/>
            <person name="McMurray A.A."/>
            <person name="Milne S.A."/>
            <person name="Mortimore B.J."/>
            <person name="Odell C.N."/>
            <person name="Pavitt R."/>
            <person name="Pearce A.V."/>
            <person name="Pearson D."/>
            <person name="Phillimore B.J.C.T."/>
            <person name="Phillips S.H."/>
            <person name="Plumb R.W."/>
            <person name="Ramsay H."/>
            <person name="Ramsey Y."/>
            <person name="Rogers L."/>
            <person name="Ross M.T."/>
            <person name="Scott C.E."/>
            <person name="Sehra H.K."/>
            <person name="Skuce C.D."/>
            <person name="Smalley S."/>
            <person name="Smith M.L."/>
            <person name="Soderlund C."/>
            <person name="Spragon L."/>
            <person name="Steward C.A."/>
            <person name="Sulston J.E."/>
            <person name="Swann R.M."/>
            <person name="Vaudin M."/>
            <person name="Wall M."/>
            <person name="Wallis J.M."/>
            <person name="Whiteley M.N."/>
            <person name="Willey D.L."/>
            <person name="Williams L."/>
            <person name="Williams S.A."/>
            <person name="Williamson H."/>
            <person name="Wilmer T.E."/>
            <person name="Wilming L."/>
            <person name="Wright C.L."/>
            <person name="Hubbard T."/>
            <person name="Bentley D.R."/>
            <person name="Beck S."/>
            <person name="Rogers J."/>
            <person name="Shimizu N."/>
            <person name="Minoshima S."/>
            <person name="Kawasaki K."/>
            <person name="Sasaki T."/>
            <person name="Asakawa S."/>
            <person name="Kudoh J."/>
            <person name="Shintani A."/>
            <person name="Shibuya K."/>
            <person name="Yoshizaki Y."/>
            <person name="Aoki N."/>
            <person name="Mitsuyama S."/>
            <person name="Roe B.A."/>
            <person name="Chen F."/>
            <person name="Chu L."/>
            <person name="Crabtree J."/>
            <person name="Deschamps S."/>
            <person name="Do A."/>
            <person name="Do T."/>
            <person name="Dorman A."/>
            <person name="Fang F."/>
            <person name="Fu Y."/>
            <person name="Hu P."/>
            <person name="Hua A."/>
            <person name="Kenton S."/>
            <person name="Lai H."/>
            <person name="Lao H.I."/>
            <person name="Lewis J."/>
            <person name="Lewis S."/>
            <person name="Lin S.-P."/>
            <person name="Loh P."/>
            <person name="Malaj E."/>
            <person name="Nguyen T."/>
            <person name="Pan H."/>
            <person name="Phan S."/>
            <person name="Qi S."/>
            <person name="Qian Y."/>
            <person name="Ray L."/>
            <person name="Ren Q."/>
            <person name="Shaull S."/>
            <person name="Sloan D."/>
            <person name="Song L."/>
            <person name="Wang Q."/>
            <person name="Wang Y."/>
            <person name="Wang Z."/>
            <person name="White J."/>
            <person name="Willingham D."/>
            <person name="Wu H."/>
            <person name="Yao Z."/>
            <person name="Zhan M."/>
            <person name="Zhang G."/>
            <person name="Chissoe S."/>
            <person name="Murray J."/>
            <person name="Miller N."/>
            <person name="Minx P."/>
            <person name="Fulton R."/>
            <person name="Johnson D."/>
            <person name="Bemis G."/>
            <person name="Bentley D."/>
            <person name="Bradshaw H."/>
            <person name="Bourne S."/>
            <person name="Cordes M."/>
            <person name="Du Z."/>
            <person name="Fulton L."/>
            <person name="Goela D."/>
            <person name="Graves T."/>
            <person name="Hawkins J."/>
            <person name="Hinds K."/>
            <person name="Kemp K."/>
            <person name="Latreille P."/>
            <person name="Layman D."/>
            <person name="Ozersky P."/>
            <person name="Rohlfing T."/>
            <person name="Scheet P."/>
            <person name="Walker C."/>
            <person name="Wamsley A."/>
            <person name="Wohldmann P."/>
            <person name="Pepin K."/>
            <person name="Nelson J."/>
            <person name="Korf I."/>
            <person name="Bedell J.A."/>
            <person name="Hillier L.W."/>
            <person name="Mardis E."/>
            <person name="Waterston R."/>
            <person name="Wilson R."/>
            <person name="Emanuel B.S."/>
            <person name="Shaikh T."/>
            <person name="Kurahashi H."/>
            <person name="Saitta S."/>
            <person name="Budarf M.L."/>
            <person name="McDermid H.E."/>
            <person name="Johnson A."/>
            <person name="Wong A.C.C."/>
            <person name="Morrow B.E."/>
            <person name="Edelmann L."/>
            <person name="Kim U.J."/>
            <person name="Shizuya H."/>
            <person name="Simon M.I."/>
            <person name="Dumanski J.P."/>
            <person name="Peyrard M."/>
            <person name="Kedra D."/>
            <person name="Seroussi E."/>
            <person name="Fransson I."/>
            <person name="Tapia I."/>
            <person name="Bruder C.E."/>
            <person name="O'Brien K.P."/>
            <person name="Wilkinson P."/>
            <person name="Bodenteich A."/>
            <person name="Hartman K."/>
            <person name="Hu X."/>
            <person name="Khan A.S."/>
            <person name="Lane L."/>
            <person name="Tilahun Y."/>
            <person name="Wright H."/>
        </authorList>
    </citation>
    <scope>NUCLEOTIDE SEQUENCE [LARGE SCALE GENOMIC DNA] (IMGT ALLELE IGLC1*02)</scope>
</reference>
<reference key="4">
    <citation type="journal article" date="1981" name="Nature">
        <title>Clustered arrangement of immunoglobulin lambda constant region genes in man.</title>
        <authorList>
            <person name="Hieter P.A."/>
            <person name="Hollis G.F."/>
            <person name="Korsmeyer S.J."/>
            <person name="Waldmann T.A."/>
            <person name="Leder P."/>
        </authorList>
    </citation>
    <scope>NUCLEOTIDE SEQUENCE [GENOMIC DNA] OF 3-106</scope>
</reference>
<reference key="5">
    <citation type="journal article" date="2001" name="Exp. Clin. Immunogenet.">
        <title>Nomenclature of the human immunoglobulin lambda (IGL) genes.</title>
        <authorList>
            <person name="Lefranc M.P."/>
        </authorList>
    </citation>
    <scope>NOMENCLATURE</scope>
</reference>
<reference key="6">
    <citation type="book" date="2001" name="The Immunoglobulin FactsBook.">
        <title>The Immunoglobulin FactsBook.</title>
        <editorList>
            <person name="Lefranc M.P."/>
            <person name="Lefranc G."/>
        </editorList>
        <authorList>
            <person name="Lefranc M.P."/>
            <person name="Lefranc G."/>
        </authorList>
    </citation>
    <scope>NOMENCLATURE</scope>
</reference>
<reference key="7">
    <citation type="book" date="2004" name="Molecular Biology of B Cells">
        <title>Immunoglobulin lambda (IGL) genes of human and mouse.</title>
        <editorList>
            <person name="Honjo T."/>
            <person name="Alt F.W."/>
            <person name="Neuberger M."/>
        </editorList>
        <authorList>
            <person name="Lefranc M.-P."/>
            <person name="Lefranc G."/>
        </authorList>
    </citation>
    <scope>SEROLOGICAL ISOTYPE</scope>
</reference>
<reference key="8">
    <citation type="journal article" date="2007" name="Annu. Rev. Genet.">
        <title>Immunoglobulin somatic hypermutation.</title>
        <authorList>
            <person name="Teng G."/>
            <person name="Papavasiliou F.N."/>
        </authorList>
    </citation>
    <scope>REVIEW ON SOMATIC HYPERMUTATION</scope>
</reference>
<reference key="9">
    <citation type="journal article" date="2010" name="J. Allergy Clin. Immunol.">
        <title>Structure and function of immunoglobulins.</title>
        <authorList>
            <person name="Schroeder H.W. Jr."/>
            <person name="Cavacini L."/>
        </authorList>
    </citation>
    <scope>REVIEW ON IMMUNOGLOBULINS</scope>
</reference>
<reference key="10">
    <citation type="journal article" date="2012" name="Nat. Rev. Immunol.">
        <title>Molecular programming of B cell memory.</title>
        <authorList>
            <person name="McHeyzer-Williams M."/>
            <person name="Okitsu S."/>
            <person name="Wang N."/>
            <person name="McHeyzer-Williams L."/>
        </authorList>
    </citation>
    <scope>REVIEW ON FUNCTION</scope>
</reference>
<reference key="11">
    <citation type="journal article" date="2015" name="J. Proteome Res.">
        <title>Human basal tear peptidome characterization by CID, HCD, and ETD followed by in silico and in vitro analyses for antimicrobial peptide identification.</title>
        <authorList>
            <person name="Azkargorta M."/>
            <person name="Soria J."/>
            <person name="Ojeda C."/>
            <person name="Guzman F."/>
            <person name="Acera A."/>
            <person name="Iloro I."/>
            <person name="Suarez T."/>
            <person name="Elortza F."/>
        </authorList>
    </citation>
    <scope>IDENTIFICATION BY MASS SPECTROMETRY</scope>
    <source>
        <tissue>Tear</tissue>
    </source>
</reference>
<reference key="12">
    <citation type="journal article" date="1975" name="Biochemistry">
        <title>Rotational allomerism and divergent evolution of domains in immunoglobulin light chains.</title>
        <authorList>
            <person name="Edmundson A.B."/>
            <person name="Ely K.R."/>
            <person name="Abola E.E."/>
            <person name="Schiffer M."/>
            <person name="Panagiotopoulos N."/>
        </authorList>
    </citation>
    <scope>X-RAY CRYSTALLOGRAPHY (2.3 ANGSTROMS)</scope>
</reference>
<reference key="13">
    <citation type="journal article" date="1989" name="J. Mol. Biol.">
        <title>Three-dimensional structure of a light chain dimer crystallized in water. Conformational flexibility of a molecule in two crystal forms.</title>
        <authorList>
            <person name="Ely K.R."/>
            <person name="Herron J.N."/>
            <person name="Harker M."/>
            <person name="Edmundson A.B."/>
        </authorList>
    </citation>
    <scope>X-RAY CRYSTALLOGRAPHY (2.0 ANGSTROMS)</scope>
</reference>
<gene>
    <name evidence="2 6" type="primary">IGLC1</name>
</gene>
<feature type="chain" id="PRO_0000153607" description="Immunoglobulin lambda constant 1">
    <location>
        <begin position="1" status="less than"/>
        <end position="106"/>
    </location>
</feature>
<feature type="domain" description="Ig-like" evidence="1">
    <location>
        <begin position="7"/>
        <end position="101"/>
    </location>
</feature>
<feature type="disulfide bond" evidence="1">
    <location>
        <begin position="28"/>
        <end position="87"/>
    </location>
</feature>
<feature type="disulfide bond" description="Interchain (with heavy chain)">
    <location>
        <position position="105"/>
    </location>
</feature>
<feature type="non-terminal residue">
    <location>
        <position position="1"/>
    </location>
</feature>
<feature type="strand" evidence="9">
    <location>
        <begin position="8"/>
        <end position="12"/>
    </location>
</feature>
<feature type="helix" evidence="9">
    <location>
        <begin position="16"/>
        <end position="20"/>
    </location>
</feature>
<feature type="strand" evidence="9">
    <location>
        <begin position="24"/>
        <end position="36"/>
    </location>
</feature>
<feature type="strand" evidence="9">
    <location>
        <begin position="39"/>
        <end position="44"/>
    </location>
</feature>
<feature type="strand" evidence="10">
    <location>
        <begin position="47"/>
        <end position="49"/>
    </location>
</feature>
<feature type="strand" evidence="9">
    <location>
        <begin position="53"/>
        <end position="55"/>
    </location>
</feature>
<feature type="strand" evidence="9">
    <location>
        <begin position="64"/>
        <end position="74"/>
    </location>
</feature>
<feature type="helix" evidence="9">
    <location>
        <begin position="76"/>
        <end position="81"/>
    </location>
</feature>
<feature type="strand" evidence="9">
    <location>
        <begin position="85"/>
        <end position="91"/>
    </location>
</feature>
<feature type="strand" evidence="9">
    <location>
        <begin position="94"/>
        <end position="100"/>
    </location>
</feature>
<feature type="turn" evidence="10">
    <location>
        <begin position="102"/>
        <end position="105"/>
    </location>
</feature>
<organism>
    <name type="scientific">Homo sapiens</name>
    <name type="common">Human</name>
    <dbReference type="NCBI Taxonomy" id="9606"/>
    <lineage>
        <taxon>Eukaryota</taxon>
        <taxon>Metazoa</taxon>
        <taxon>Chordata</taxon>
        <taxon>Craniata</taxon>
        <taxon>Vertebrata</taxon>
        <taxon>Euteleostomi</taxon>
        <taxon>Mammalia</taxon>
        <taxon>Eutheria</taxon>
        <taxon>Euarchontoglires</taxon>
        <taxon>Primates</taxon>
        <taxon>Haplorrhini</taxon>
        <taxon>Catarrhini</taxon>
        <taxon>Hominidae</taxon>
        <taxon>Homo</taxon>
    </lineage>
</organism>
<sequence>GQPKANPTVTLFPPSSEELQANKATLVCLISDFYPGAVTVAWKADGSPVKAGVETTKPSKQSNNKYAASSYLSLTPEQWKSHRSYSCQVTHEGSTVEKTVAPTECS</sequence>